<name>ELYA_HALH5</name>
<proteinExistence type="evidence at protein level"/>
<sequence>MRQSLKVMVLSTVALLFMANPAAASEEKKEYLIVVEPEEVSAQSVEESYDVDVIHEFEEIPVIHAELTKKELKKLKKDPNVKAIEKNAEVTISQTVPWGISFINTQQAHNRGIFGNGARVAVLDTGIASHPDLRIAGGASFISSEPSYHDNNGHGTHVAGTIAALNNSIGVLGVAPSADLYAVKVLDRNGSGSLASVAQGIEWAINNNMHIINMSLGSTSGSSTLELAVNRANNAGILLVGAAGNTGRQGVNYPARYSGVMAVAAVDQNGQRASFSTYGPEIEISAPGVNVNSTYTGNRYVSLSGTSMATPHVAGVAALVKSRYPSYTNNQIRQRINQTATYLGSPSLYGNGLVHAGRATQ</sequence>
<gene>
    <name type="ordered locus">BH0855</name>
</gene>
<organism>
    <name type="scientific">Halalkalibacterium halodurans (strain ATCC BAA-125 / DSM 18197 / FERM 7344 / JCM 9153 / C-125)</name>
    <name type="common">Bacillus halodurans</name>
    <dbReference type="NCBI Taxonomy" id="272558"/>
    <lineage>
        <taxon>Bacteria</taxon>
        <taxon>Bacillati</taxon>
        <taxon>Bacillota</taxon>
        <taxon>Bacilli</taxon>
        <taxon>Bacillales</taxon>
        <taxon>Bacillaceae</taxon>
        <taxon>Halalkalibacterium (ex Joshi et al. 2022)</taxon>
    </lineage>
</organism>
<reference key="1">
    <citation type="journal article" date="1992" name="Appl. Microbiol. Biotechnol.">
        <title>Molecular cloning, nucleotide sequence and expression of the structural gene for a thermostable alkaline protease from Bacillus sp. no. AH-101.</title>
        <authorList>
            <person name="Takami H."/>
            <person name="Kobayashi T."/>
            <person name="Aono R."/>
            <person name="Horikoshi K."/>
        </authorList>
    </citation>
    <scope>NUCLEOTIDE SEQUENCE [GENOMIC DNA]</scope>
    <source>
        <strain>AH-101 / JCM 9161 / FERM 10531</strain>
    </source>
</reference>
<reference key="2">
    <citation type="submission" date="1999-08" db="EMBL/GenBank/DDBJ databases">
        <authorList>
            <person name="Takami H."/>
            <person name="Kobayashi T."/>
            <person name="Aono R."/>
            <person name="Horikoshi K."/>
        </authorList>
    </citation>
    <scope>SEQUENCE REVISION</scope>
</reference>
<reference key="3">
    <citation type="journal article" date="2000" name="Nucleic Acids Res.">
        <title>Complete genome sequence of the alkaliphilic bacterium Bacillus halodurans and genomic sequence comparison with Bacillus subtilis.</title>
        <authorList>
            <person name="Takami H."/>
            <person name="Nakasone K."/>
            <person name="Takaki Y."/>
            <person name="Maeno G."/>
            <person name="Sasaki R."/>
            <person name="Masui N."/>
            <person name="Fuji F."/>
            <person name="Hirama C."/>
            <person name="Nakamura Y."/>
            <person name="Ogasawara N."/>
            <person name="Kuhara S."/>
            <person name="Horikoshi K."/>
        </authorList>
    </citation>
    <scope>NUCLEOTIDE SEQUENCE [LARGE SCALE GENOMIC DNA]</scope>
    <source>
        <strain>ATCC BAA-125 / DSM 18197 / FERM 7344 / JCM 9153 / C-125</strain>
    </source>
</reference>
<reference key="4">
    <citation type="journal article" date="1990" name="Appl. Microbiol. Biotechnol.">
        <title>Characterization of an alkaline protease from Bacillus sp. no. AH-101.</title>
        <authorList>
            <person name="Takami H."/>
            <person name="Akiba T."/>
            <person name="Horikoshi K."/>
        </authorList>
    </citation>
    <scope>PROTEIN SEQUENCE OF 94-113</scope>
    <source>
        <strain>AH-101 / JCM 9161 / FERM 10531</strain>
    </source>
</reference>
<evidence type="ECO:0000250" key="1"/>
<evidence type="ECO:0000255" key="2"/>
<evidence type="ECO:0000255" key="3">
    <source>
        <dbReference type="PROSITE-ProRule" id="PRU01240"/>
    </source>
</evidence>
<evidence type="ECO:0000269" key="4">
    <source>
    </source>
</evidence>
<evidence type="ECO:0000305" key="5"/>
<comment type="function">
    <text>Shows keratinolytic activity.</text>
</comment>
<comment type="cofactor">
    <cofactor evidence="1">
        <name>Ca(2+)</name>
        <dbReference type="ChEBI" id="CHEBI:29108"/>
    </cofactor>
    <text evidence="1">Binds 2 calcium ions per subunit.</text>
</comment>
<comment type="biophysicochemical properties">
    <phDependence>
        <text>Optimum pH is 12-13.</text>
    </phDependence>
    <temperatureDependence>
        <text>Thermostable.</text>
    </temperatureDependence>
</comment>
<comment type="subcellular location">
    <subcellularLocation>
        <location>Secreted</location>
    </subcellularLocation>
</comment>
<comment type="similarity">
    <text evidence="5">Belongs to the peptidase S8 family.</text>
</comment>
<accession>P41363</accession>
<accession>Q53294</accession>
<accession>Q9KEJ7</accession>
<feature type="signal peptide" evidence="2">
    <location>
        <begin position="1"/>
        <end position="24"/>
    </location>
</feature>
<feature type="propeptide" id="PRO_0000027012" evidence="4">
    <location>
        <begin position="25"/>
        <end position="93"/>
    </location>
</feature>
<feature type="chain" id="PRO_0000027013" description="Thermostable alkaline protease">
    <location>
        <begin position="94"/>
        <end position="361"/>
    </location>
</feature>
<feature type="domain" description="Peptidase S8" evidence="3">
    <location>
        <begin position="97"/>
        <end position="360"/>
    </location>
</feature>
<feature type="active site" description="Charge relay system" evidence="3">
    <location>
        <position position="124"/>
    </location>
</feature>
<feature type="active site" description="Charge relay system" evidence="3">
    <location>
        <position position="154"/>
    </location>
</feature>
<feature type="active site" description="Charge relay system" evidence="3">
    <location>
        <position position="307"/>
    </location>
</feature>
<feature type="binding site" evidence="1">
    <location>
        <position position="94"/>
    </location>
    <ligand>
        <name>Ca(2+)</name>
        <dbReference type="ChEBI" id="CHEBI:29108"/>
        <label>1</label>
    </ligand>
</feature>
<feature type="binding site" evidence="1">
    <location>
        <position position="132"/>
    </location>
    <ligand>
        <name>Ca(2+)</name>
        <dbReference type="ChEBI" id="CHEBI:29108"/>
        <label>1</label>
    </ligand>
</feature>
<feature type="binding site" evidence="1">
    <location>
        <position position="165"/>
    </location>
    <ligand>
        <name>Ca(2+)</name>
        <dbReference type="ChEBI" id="CHEBI:29108"/>
        <label>1</label>
    </ligand>
</feature>
<feature type="binding site" evidence="1">
    <location>
        <position position="167"/>
    </location>
    <ligand>
        <name>Ca(2+)</name>
        <dbReference type="ChEBI" id="CHEBI:29108"/>
        <label>1</label>
    </ligand>
</feature>
<feature type="binding site" evidence="1">
    <location>
        <position position="169"/>
    </location>
    <ligand>
        <name>Ca(2+)</name>
        <dbReference type="ChEBI" id="CHEBI:29108"/>
        <label>1</label>
    </ligand>
</feature>
<feature type="binding site" evidence="1">
    <location>
        <position position="171"/>
    </location>
    <ligand>
        <name>Ca(2+)</name>
        <dbReference type="ChEBI" id="CHEBI:29108"/>
        <label>1</label>
    </ligand>
</feature>
<feature type="binding site" evidence="1">
    <location>
        <position position="255"/>
    </location>
    <ligand>
        <name>Ca(2+)</name>
        <dbReference type="ChEBI" id="CHEBI:29108"/>
        <label>2</label>
    </ligand>
</feature>
<feature type="binding site" evidence="1">
    <location>
        <position position="257"/>
    </location>
    <ligand>
        <name>Ca(2+)</name>
        <dbReference type="ChEBI" id="CHEBI:29108"/>
        <label>2</label>
    </ligand>
</feature>
<feature type="binding site" evidence="1">
    <location>
        <position position="260"/>
    </location>
    <ligand>
        <name>Ca(2+)</name>
        <dbReference type="ChEBI" id="CHEBI:29108"/>
        <label>2</label>
    </ligand>
</feature>
<feature type="sequence variant" description="In strain: AH-101.">
    <original>E</original>
    <variation>D</variation>
    <location>
        <position position="38"/>
    </location>
</feature>
<feature type="sequence variant" description="In strain: AH-101.">
    <original>KK</original>
    <variation>EE</variation>
    <location>
        <begin position="69"/>
        <end position="70"/>
    </location>
</feature>
<feature type="sequence variant" description="In strain: AH-101.">
    <original>KLKK</original>
    <variation>ELQN</variation>
    <location>
        <begin position="74"/>
        <end position="77"/>
    </location>
</feature>
<feature type="sequence variant" description="In strain: AH-101.">
    <original>K</original>
    <variation>E</variation>
    <location>
        <position position="86"/>
    </location>
</feature>
<feature type="sequence variant" description="In strain: AH-101.">
    <original>N</original>
    <variation>S</variation>
    <location>
        <position position="104"/>
    </location>
</feature>
<feature type="sequence variant" description="In strain: AH-101.">
    <original>N</original>
    <variation>Y</variation>
    <location>
        <position position="292"/>
    </location>
</feature>
<feature type="sequence variant" description="In strain: AH-101.">
    <original>PS</original>
    <variation>SN</variation>
    <location>
        <begin position="346"/>
        <end position="347"/>
    </location>
</feature>
<dbReference type="EC" id="3.4.21.-"/>
<dbReference type="EMBL" id="D13158">
    <property type="protein sequence ID" value="BAA02443.2"/>
    <property type="molecule type" value="Genomic_DNA"/>
</dbReference>
<dbReference type="EMBL" id="BA000004">
    <property type="protein sequence ID" value="BAB04574.1"/>
    <property type="molecule type" value="Genomic_DNA"/>
</dbReference>
<dbReference type="PIR" id="G83756">
    <property type="entry name" value="G83756"/>
</dbReference>
<dbReference type="RefSeq" id="WP_010897028.1">
    <property type="nucleotide sequence ID" value="NC_002570.2"/>
</dbReference>
<dbReference type="SMR" id="P41363"/>
<dbReference type="STRING" id="272558.gene:10726729"/>
<dbReference type="MEROPS" id="S08.046"/>
<dbReference type="KEGG" id="bha:BH0855"/>
<dbReference type="eggNOG" id="COG1404">
    <property type="taxonomic scope" value="Bacteria"/>
</dbReference>
<dbReference type="HOGENOM" id="CLU_011263_15_7_9"/>
<dbReference type="OrthoDB" id="9798386at2"/>
<dbReference type="Proteomes" id="UP000001258">
    <property type="component" value="Chromosome"/>
</dbReference>
<dbReference type="GO" id="GO:0005576">
    <property type="term" value="C:extracellular region"/>
    <property type="evidence" value="ECO:0007669"/>
    <property type="project" value="UniProtKB-SubCell"/>
</dbReference>
<dbReference type="GO" id="GO:0046872">
    <property type="term" value="F:metal ion binding"/>
    <property type="evidence" value="ECO:0007669"/>
    <property type="project" value="UniProtKB-KW"/>
</dbReference>
<dbReference type="GO" id="GO:0004252">
    <property type="term" value="F:serine-type endopeptidase activity"/>
    <property type="evidence" value="ECO:0007669"/>
    <property type="project" value="InterPro"/>
</dbReference>
<dbReference type="GO" id="GO:0006508">
    <property type="term" value="P:proteolysis"/>
    <property type="evidence" value="ECO:0007669"/>
    <property type="project" value="UniProtKB-KW"/>
</dbReference>
<dbReference type="CDD" id="cd07477">
    <property type="entry name" value="Peptidases_S8_Subtilisin_subset"/>
    <property type="match status" value="1"/>
</dbReference>
<dbReference type="Gene3D" id="3.30.70.80">
    <property type="entry name" value="Peptidase S8 propeptide/proteinase inhibitor I9"/>
    <property type="match status" value="1"/>
</dbReference>
<dbReference type="Gene3D" id="3.40.50.200">
    <property type="entry name" value="Peptidase S8/S53 domain"/>
    <property type="match status" value="1"/>
</dbReference>
<dbReference type="InterPro" id="IPR000209">
    <property type="entry name" value="Peptidase_S8/S53_dom"/>
</dbReference>
<dbReference type="InterPro" id="IPR036852">
    <property type="entry name" value="Peptidase_S8/S53_dom_sf"/>
</dbReference>
<dbReference type="InterPro" id="IPR023827">
    <property type="entry name" value="Peptidase_S8_Asp-AS"/>
</dbReference>
<dbReference type="InterPro" id="IPR022398">
    <property type="entry name" value="Peptidase_S8_His-AS"/>
</dbReference>
<dbReference type="InterPro" id="IPR023828">
    <property type="entry name" value="Peptidase_S8_Ser-AS"/>
</dbReference>
<dbReference type="InterPro" id="IPR050131">
    <property type="entry name" value="Peptidase_S8_subtilisin-like"/>
</dbReference>
<dbReference type="InterPro" id="IPR015500">
    <property type="entry name" value="Peptidase_S8_subtilisin-rel"/>
</dbReference>
<dbReference type="InterPro" id="IPR010259">
    <property type="entry name" value="S8pro/Inhibitor_I9"/>
</dbReference>
<dbReference type="InterPro" id="IPR037045">
    <property type="entry name" value="S8pro/Inhibitor_I9_sf"/>
</dbReference>
<dbReference type="InterPro" id="IPR034202">
    <property type="entry name" value="Subtilisin_Carlsberg-like"/>
</dbReference>
<dbReference type="PANTHER" id="PTHR43806:SF11">
    <property type="entry name" value="CEREVISIN-RELATED"/>
    <property type="match status" value="1"/>
</dbReference>
<dbReference type="PANTHER" id="PTHR43806">
    <property type="entry name" value="PEPTIDASE S8"/>
    <property type="match status" value="1"/>
</dbReference>
<dbReference type="Pfam" id="PF05922">
    <property type="entry name" value="Inhibitor_I9"/>
    <property type="match status" value="1"/>
</dbReference>
<dbReference type="Pfam" id="PF00082">
    <property type="entry name" value="Peptidase_S8"/>
    <property type="match status" value="1"/>
</dbReference>
<dbReference type="PRINTS" id="PR00723">
    <property type="entry name" value="SUBTILISIN"/>
</dbReference>
<dbReference type="SUPFAM" id="SSF54897">
    <property type="entry name" value="Protease propeptides/inhibitors"/>
    <property type="match status" value="1"/>
</dbReference>
<dbReference type="SUPFAM" id="SSF52743">
    <property type="entry name" value="Subtilisin-like"/>
    <property type="match status" value="1"/>
</dbReference>
<dbReference type="PROSITE" id="PS51892">
    <property type="entry name" value="SUBTILASE"/>
    <property type="match status" value="1"/>
</dbReference>
<dbReference type="PROSITE" id="PS00136">
    <property type="entry name" value="SUBTILASE_ASP"/>
    <property type="match status" value="1"/>
</dbReference>
<dbReference type="PROSITE" id="PS00137">
    <property type="entry name" value="SUBTILASE_HIS"/>
    <property type="match status" value="1"/>
</dbReference>
<dbReference type="PROSITE" id="PS00138">
    <property type="entry name" value="SUBTILASE_SER"/>
    <property type="match status" value="1"/>
</dbReference>
<keyword id="KW-0106">Calcium</keyword>
<keyword id="KW-0903">Direct protein sequencing</keyword>
<keyword id="KW-0378">Hydrolase</keyword>
<keyword id="KW-0479">Metal-binding</keyword>
<keyword id="KW-0645">Protease</keyword>
<keyword id="KW-1185">Reference proteome</keyword>
<keyword id="KW-0964">Secreted</keyword>
<keyword id="KW-0720">Serine protease</keyword>
<keyword id="KW-0732">Signal</keyword>
<keyword id="KW-0865">Zymogen</keyword>
<protein>
    <recommendedName>
        <fullName>Thermostable alkaline protease</fullName>
        <ecNumber>3.4.21.-</ecNumber>
    </recommendedName>
</protein>